<keyword id="KW-0378">Hydrolase</keyword>
<keyword id="KW-0460">Magnesium</keyword>
<keyword id="KW-0479">Metal-binding</keyword>
<keyword id="KW-0540">Nuclease</keyword>
<keyword id="KW-1185">Reference proteome</keyword>
<keyword id="KW-1277">Toxin-antitoxin system</keyword>
<proteinExistence type="evidence at protein level"/>
<gene>
    <name evidence="1" type="primary">vapC31</name>
    <name type="ordered locus">Rv0749</name>
</gene>
<evidence type="ECO:0000255" key="1">
    <source>
        <dbReference type="HAMAP-Rule" id="MF_00265"/>
    </source>
</evidence>
<evidence type="ECO:0000269" key="2">
    <source>
    </source>
</evidence>
<evidence type="ECO:0000269" key="3">
    <source>
    </source>
</evidence>
<name>VPC31_MYCTU</name>
<comment type="function">
    <text evidence="1 2">Toxic component of a type II toxin-antitoxin (TA) system. An RNase (By similarity). Upon expression in M.smegmatis inhibits colony formation. Its toxic effect is neutralized by coexpression with cognate antitoxin VapB31 (By similarity).</text>
</comment>
<comment type="cofactor">
    <cofactor evidence="1">
        <name>Mg(2+)</name>
        <dbReference type="ChEBI" id="CHEBI:18420"/>
    </cofactor>
</comment>
<comment type="induction">
    <text evidence="3">Induced in persister cells in response to D-cycloserine.</text>
</comment>
<comment type="similarity">
    <text evidence="1">Belongs to the PINc/VapC protein family.</text>
</comment>
<accession>P9WF75</accession>
<accession>L0T6C8</accession>
<accession>O53812</accession>
<accession>Q7D9C4</accession>
<reference key="1">
    <citation type="journal article" date="1998" name="Nature">
        <title>Deciphering the biology of Mycobacterium tuberculosis from the complete genome sequence.</title>
        <authorList>
            <person name="Cole S.T."/>
            <person name="Brosch R."/>
            <person name="Parkhill J."/>
            <person name="Garnier T."/>
            <person name="Churcher C.M."/>
            <person name="Harris D.E."/>
            <person name="Gordon S.V."/>
            <person name="Eiglmeier K."/>
            <person name="Gas S."/>
            <person name="Barry C.E. III"/>
            <person name="Tekaia F."/>
            <person name="Badcock K."/>
            <person name="Basham D."/>
            <person name="Brown D."/>
            <person name="Chillingworth T."/>
            <person name="Connor R."/>
            <person name="Davies R.M."/>
            <person name="Devlin K."/>
            <person name="Feltwell T."/>
            <person name="Gentles S."/>
            <person name="Hamlin N."/>
            <person name="Holroyd S."/>
            <person name="Hornsby T."/>
            <person name="Jagels K."/>
            <person name="Krogh A."/>
            <person name="McLean J."/>
            <person name="Moule S."/>
            <person name="Murphy L.D."/>
            <person name="Oliver S."/>
            <person name="Osborne J."/>
            <person name="Quail M.A."/>
            <person name="Rajandream M.A."/>
            <person name="Rogers J."/>
            <person name="Rutter S."/>
            <person name="Seeger K."/>
            <person name="Skelton S."/>
            <person name="Squares S."/>
            <person name="Squares R."/>
            <person name="Sulston J.E."/>
            <person name="Taylor K."/>
            <person name="Whitehead S."/>
            <person name="Barrell B.G."/>
        </authorList>
    </citation>
    <scope>NUCLEOTIDE SEQUENCE [LARGE SCALE GENOMIC DNA]</scope>
    <source>
        <strain>ATCC 25618 / H37Rv</strain>
    </source>
</reference>
<reference key="2">
    <citation type="journal article" date="2002" name="Microbiology">
        <title>Re-annotation of the genome sequence of Mycobacterium tuberculosis H37Rv.</title>
        <authorList>
            <person name="Camus J.-C."/>
            <person name="Pryor M.J."/>
            <person name="Medigue C."/>
            <person name="Cole S.T."/>
        </authorList>
    </citation>
    <scope>IDENTIFICATION</scope>
    <source>
        <strain>ATCC 25618 / H37Rv</strain>
    </source>
</reference>
<reference key="3">
    <citation type="journal article" date="2009" name="PLoS Genet.">
        <title>Comprehensive functional analysis of Mycobacterium tuberculosis toxin-antitoxin systems: implications for pathogenesis, stress responses, and evolution.</title>
        <authorList>
            <person name="Ramage H.R."/>
            <person name="Connolly L.E."/>
            <person name="Cox J.S."/>
        </authorList>
    </citation>
    <scope>EXPRESSION IN M.SMEGMATIS</scope>
    <scope>FUNCTION AS A TOXIN</scope>
    <source>
        <strain>ATCC 35801 / TMC 107 / Erdman</strain>
    </source>
</reference>
<reference key="4">
    <citation type="journal article" date="2011" name="MBio">
        <title>Characterization and transcriptome analysis of Mycobacterium tuberculosis persisters.</title>
        <authorList>
            <person name="Keren I."/>
            <person name="Minami S."/>
            <person name="Rubin E."/>
            <person name="Lewis K."/>
        </authorList>
    </citation>
    <scope>INDUCTION IN PERSISTER CELLS</scope>
    <source>
        <strain>ATCC 25618 / H37Rv</strain>
    </source>
</reference>
<reference key="5">
    <citation type="journal article" date="2011" name="Mol. Cell. Proteomics">
        <title>Proteogenomic analysis of Mycobacterium tuberculosis by high resolution mass spectrometry.</title>
        <authorList>
            <person name="Kelkar D.S."/>
            <person name="Kumar D."/>
            <person name="Kumar P."/>
            <person name="Balakrishnan L."/>
            <person name="Muthusamy B."/>
            <person name="Yadav A.K."/>
            <person name="Shrivastava P."/>
            <person name="Marimuthu A."/>
            <person name="Anand S."/>
            <person name="Sundaram H."/>
            <person name="Kingsbury R."/>
            <person name="Harsha H.C."/>
            <person name="Nair B."/>
            <person name="Prasad T.S."/>
            <person name="Chauhan D.S."/>
            <person name="Katoch K."/>
            <person name="Katoch V.M."/>
            <person name="Kumar P."/>
            <person name="Chaerkady R."/>
            <person name="Ramachandran S."/>
            <person name="Dash D."/>
            <person name="Pandey A."/>
        </authorList>
    </citation>
    <scope>IDENTIFICATION BY MASS SPECTROMETRY [LARGE SCALE ANALYSIS]</scope>
    <source>
        <strain>ATCC 25618 / H37Rv</strain>
    </source>
</reference>
<organism>
    <name type="scientific">Mycobacterium tuberculosis (strain ATCC 25618 / H37Rv)</name>
    <dbReference type="NCBI Taxonomy" id="83332"/>
    <lineage>
        <taxon>Bacteria</taxon>
        <taxon>Bacillati</taxon>
        <taxon>Actinomycetota</taxon>
        <taxon>Actinomycetes</taxon>
        <taxon>Mycobacteriales</taxon>
        <taxon>Mycobacteriaceae</taxon>
        <taxon>Mycobacterium</taxon>
        <taxon>Mycobacterium tuberculosis complex</taxon>
    </lineage>
</organism>
<dbReference type="EC" id="3.1.-.-" evidence="1"/>
<dbReference type="EMBL" id="AL123456">
    <property type="protein sequence ID" value="CCP43494.1"/>
    <property type="molecule type" value="Genomic_DNA"/>
</dbReference>
<dbReference type="PIR" id="H70824">
    <property type="entry name" value="H70824"/>
</dbReference>
<dbReference type="RefSeq" id="NP_215263.1">
    <property type="nucleotide sequence ID" value="NC_000962.3"/>
</dbReference>
<dbReference type="RefSeq" id="WP_003403837.1">
    <property type="nucleotide sequence ID" value="NZ_NVQJ01000035.1"/>
</dbReference>
<dbReference type="SMR" id="P9WF75"/>
<dbReference type="STRING" id="83332.Rv0749"/>
<dbReference type="PaxDb" id="83332-Rv0749"/>
<dbReference type="DNASU" id="888681"/>
<dbReference type="GeneID" id="888681"/>
<dbReference type="KEGG" id="mtu:Rv0749"/>
<dbReference type="KEGG" id="mtv:RVBD_0749"/>
<dbReference type="TubercuList" id="Rv0749"/>
<dbReference type="eggNOG" id="COG1848">
    <property type="taxonomic scope" value="Bacteria"/>
</dbReference>
<dbReference type="InParanoid" id="P9WF75"/>
<dbReference type="OrthoDB" id="556169at2"/>
<dbReference type="PhylomeDB" id="P9WF75"/>
<dbReference type="Proteomes" id="UP000001584">
    <property type="component" value="Chromosome"/>
</dbReference>
<dbReference type="GO" id="GO:0000287">
    <property type="term" value="F:magnesium ion binding"/>
    <property type="evidence" value="ECO:0007669"/>
    <property type="project" value="UniProtKB-UniRule"/>
</dbReference>
<dbReference type="GO" id="GO:0004540">
    <property type="term" value="F:RNA nuclease activity"/>
    <property type="evidence" value="ECO:0007669"/>
    <property type="project" value="InterPro"/>
</dbReference>
<dbReference type="GO" id="GO:0045926">
    <property type="term" value="P:negative regulation of growth"/>
    <property type="evidence" value="ECO:0000315"/>
    <property type="project" value="MTBBASE"/>
</dbReference>
<dbReference type="CDD" id="cd18678">
    <property type="entry name" value="PIN_MtVapC25_VapC33-like"/>
    <property type="match status" value="1"/>
</dbReference>
<dbReference type="FunFam" id="3.40.50.1010:FF:000048">
    <property type="entry name" value="Ribonuclease VapC"/>
    <property type="match status" value="1"/>
</dbReference>
<dbReference type="Gene3D" id="3.40.50.1010">
    <property type="entry name" value="5'-nuclease"/>
    <property type="match status" value="1"/>
</dbReference>
<dbReference type="HAMAP" id="MF_00265">
    <property type="entry name" value="VapC_Nob1"/>
    <property type="match status" value="1"/>
</dbReference>
<dbReference type="InterPro" id="IPR006226">
    <property type="entry name" value="Mtu_PIN"/>
</dbReference>
<dbReference type="InterPro" id="IPR029060">
    <property type="entry name" value="PIN-like_dom_sf"/>
</dbReference>
<dbReference type="InterPro" id="IPR002716">
    <property type="entry name" value="PIN_dom"/>
</dbReference>
<dbReference type="InterPro" id="IPR022907">
    <property type="entry name" value="VapC_family"/>
</dbReference>
<dbReference type="NCBIfam" id="TIGR00028">
    <property type="entry name" value="Mtu_PIN_fam"/>
    <property type="match status" value="1"/>
</dbReference>
<dbReference type="Pfam" id="PF01850">
    <property type="entry name" value="PIN"/>
    <property type="match status" value="1"/>
</dbReference>
<dbReference type="SUPFAM" id="SSF88723">
    <property type="entry name" value="PIN domain-like"/>
    <property type="match status" value="1"/>
</dbReference>
<feature type="chain" id="PRO_0000407888" description="Ribonuclease VapC31">
    <location>
        <begin position="1"/>
        <end position="142"/>
    </location>
</feature>
<feature type="domain" description="PINc" evidence="1">
    <location>
        <begin position="3"/>
        <end position="139"/>
    </location>
</feature>
<feature type="binding site" evidence="1">
    <location>
        <position position="5"/>
    </location>
    <ligand>
        <name>Mg(2+)</name>
        <dbReference type="ChEBI" id="CHEBI:18420"/>
    </ligand>
</feature>
<feature type="binding site" evidence="1">
    <location>
        <position position="108"/>
    </location>
    <ligand>
        <name>Mg(2+)</name>
        <dbReference type="ChEBI" id="CHEBI:18420"/>
    </ligand>
</feature>
<protein>
    <recommendedName>
        <fullName evidence="1">Ribonuclease VapC31</fullName>
        <shortName evidence="1">RNase VapC31</shortName>
        <ecNumber evidence="1">3.1.-.-</ecNumber>
    </recommendedName>
    <alternativeName>
        <fullName evidence="1">Toxin VapC31</fullName>
    </alternativeName>
</protein>
<sequence length="142" mass="15831">MFLLDANVLLAAHRGDHPNHRTVRPWFDRLLAADDPFTVPNLVWASFLRLATNRRIFEIPSPRAEAFAFVEAVTAQPHHLPTNPGPRHLMLLRKLCDEADASGDLIPDAVLAAIAVGHHCAVVSLDRDFARFASVRHIRPPL</sequence>